<name>UREG_RHOPA</name>
<evidence type="ECO:0000255" key="1">
    <source>
        <dbReference type="HAMAP-Rule" id="MF_01389"/>
    </source>
</evidence>
<dbReference type="EMBL" id="BX572606">
    <property type="protein sequence ID" value="CAE29668.1"/>
    <property type="molecule type" value="Genomic_DNA"/>
</dbReference>
<dbReference type="RefSeq" id="WP_011159762.1">
    <property type="nucleotide sequence ID" value="NZ_CP116810.1"/>
</dbReference>
<dbReference type="SMR" id="Q6N223"/>
<dbReference type="STRING" id="258594.RPA4227"/>
<dbReference type="GeneID" id="66895353"/>
<dbReference type="eggNOG" id="COG0378">
    <property type="taxonomic scope" value="Bacteria"/>
</dbReference>
<dbReference type="HOGENOM" id="CLU_072144_1_0_5"/>
<dbReference type="PhylomeDB" id="Q6N223"/>
<dbReference type="GO" id="GO:0005737">
    <property type="term" value="C:cytoplasm"/>
    <property type="evidence" value="ECO:0007669"/>
    <property type="project" value="UniProtKB-SubCell"/>
</dbReference>
<dbReference type="GO" id="GO:0005525">
    <property type="term" value="F:GTP binding"/>
    <property type="evidence" value="ECO:0007669"/>
    <property type="project" value="UniProtKB-KW"/>
</dbReference>
<dbReference type="GO" id="GO:0003924">
    <property type="term" value="F:GTPase activity"/>
    <property type="evidence" value="ECO:0007669"/>
    <property type="project" value="InterPro"/>
</dbReference>
<dbReference type="GO" id="GO:0016151">
    <property type="term" value="F:nickel cation binding"/>
    <property type="evidence" value="ECO:0007669"/>
    <property type="project" value="UniProtKB-UniRule"/>
</dbReference>
<dbReference type="GO" id="GO:0043419">
    <property type="term" value="P:urea catabolic process"/>
    <property type="evidence" value="ECO:0007669"/>
    <property type="project" value="InterPro"/>
</dbReference>
<dbReference type="CDD" id="cd05540">
    <property type="entry name" value="UreG"/>
    <property type="match status" value="1"/>
</dbReference>
<dbReference type="FunFam" id="3.40.50.300:FF:000208">
    <property type="entry name" value="Urease accessory protein UreG"/>
    <property type="match status" value="1"/>
</dbReference>
<dbReference type="Gene3D" id="3.40.50.300">
    <property type="entry name" value="P-loop containing nucleotide triphosphate hydrolases"/>
    <property type="match status" value="1"/>
</dbReference>
<dbReference type="HAMAP" id="MF_01389">
    <property type="entry name" value="UreG"/>
    <property type="match status" value="1"/>
</dbReference>
<dbReference type="InterPro" id="IPR003495">
    <property type="entry name" value="CobW/HypB/UreG_nucleotide-bd"/>
</dbReference>
<dbReference type="InterPro" id="IPR027417">
    <property type="entry name" value="P-loop_NTPase"/>
</dbReference>
<dbReference type="InterPro" id="IPR004400">
    <property type="entry name" value="UreG"/>
</dbReference>
<dbReference type="NCBIfam" id="TIGR00101">
    <property type="entry name" value="ureG"/>
    <property type="match status" value="1"/>
</dbReference>
<dbReference type="PANTHER" id="PTHR31715">
    <property type="entry name" value="UREASE ACCESSORY PROTEIN G"/>
    <property type="match status" value="1"/>
</dbReference>
<dbReference type="PANTHER" id="PTHR31715:SF0">
    <property type="entry name" value="UREASE ACCESSORY PROTEIN G"/>
    <property type="match status" value="1"/>
</dbReference>
<dbReference type="Pfam" id="PF02492">
    <property type="entry name" value="cobW"/>
    <property type="match status" value="1"/>
</dbReference>
<dbReference type="PIRSF" id="PIRSF005624">
    <property type="entry name" value="Ni-bind_GTPase"/>
    <property type="match status" value="1"/>
</dbReference>
<dbReference type="SUPFAM" id="SSF52540">
    <property type="entry name" value="P-loop containing nucleoside triphosphate hydrolases"/>
    <property type="match status" value="1"/>
</dbReference>
<gene>
    <name evidence="1" type="primary">ureG</name>
    <name type="ordered locus">RPA4227</name>
</gene>
<organism>
    <name type="scientific">Rhodopseudomonas palustris (strain ATCC BAA-98 / CGA009)</name>
    <dbReference type="NCBI Taxonomy" id="258594"/>
    <lineage>
        <taxon>Bacteria</taxon>
        <taxon>Pseudomonadati</taxon>
        <taxon>Pseudomonadota</taxon>
        <taxon>Alphaproteobacteria</taxon>
        <taxon>Hyphomicrobiales</taxon>
        <taxon>Nitrobacteraceae</taxon>
        <taxon>Rhodopseudomonas</taxon>
    </lineage>
</organism>
<protein>
    <recommendedName>
        <fullName evidence="1">Urease accessory protein UreG</fullName>
    </recommendedName>
</protein>
<comment type="function">
    <text evidence="1">Facilitates the functional incorporation of the urease nickel metallocenter. This process requires GTP hydrolysis, probably effectuated by UreG.</text>
</comment>
<comment type="subunit">
    <text evidence="1">Homodimer. UreD, UreF and UreG form a complex that acts as a GTP-hydrolysis-dependent molecular chaperone, activating the urease apoprotein by helping to assemble the nickel containing metallocenter of UreC. The UreE protein probably delivers the nickel.</text>
</comment>
<comment type="subcellular location">
    <subcellularLocation>
        <location evidence="1">Cytoplasm</location>
    </subcellularLocation>
</comment>
<comment type="similarity">
    <text evidence="1">Belongs to the SIMIBI class G3E GTPase family. UreG subfamily.</text>
</comment>
<accession>Q6N223</accession>
<feature type="chain" id="PRO_0000347442" description="Urease accessory protein UreG">
    <location>
        <begin position="1"/>
        <end position="209"/>
    </location>
</feature>
<feature type="binding site" evidence="1">
    <location>
        <begin position="14"/>
        <end position="21"/>
    </location>
    <ligand>
        <name>GTP</name>
        <dbReference type="ChEBI" id="CHEBI:37565"/>
    </ligand>
</feature>
<reference key="1">
    <citation type="journal article" date="2004" name="Nat. Biotechnol.">
        <title>Complete genome sequence of the metabolically versatile photosynthetic bacterium Rhodopseudomonas palustris.</title>
        <authorList>
            <person name="Larimer F.W."/>
            <person name="Chain P."/>
            <person name="Hauser L."/>
            <person name="Lamerdin J.E."/>
            <person name="Malfatti S."/>
            <person name="Do L."/>
            <person name="Land M.L."/>
            <person name="Pelletier D.A."/>
            <person name="Beatty J.T."/>
            <person name="Lang A.S."/>
            <person name="Tabita F.R."/>
            <person name="Gibson J.L."/>
            <person name="Hanson T.E."/>
            <person name="Bobst C."/>
            <person name="Torres y Torres J.L."/>
            <person name="Peres C."/>
            <person name="Harrison F.H."/>
            <person name="Gibson J."/>
            <person name="Harwood C.S."/>
        </authorList>
    </citation>
    <scope>NUCLEOTIDE SEQUENCE [LARGE SCALE GENOMIC DNA]</scope>
    <source>
        <strain>ATCC BAA-98 / CGA009</strain>
    </source>
</reference>
<sequence>MSDHHGPLRVGIGGPVGSGKTALMDLLCKSMRERYDIAAITNDIYTKWDAEFLVRSGSLTPDRIAGVETGGCPHTAIREDASMNLAAVAEMRSKFPGLDLVLIESGGDNLAATFSPELADITIYVIDVAAGDKIPSKGGPGITRSDLLVINKIDLAPYVGASLEKMDTDAKRMRGARPFVMTNLKKSEGLDRIIGFIEEKGGLTPRRSA</sequence>
<keyword id="KW-0143">Chaperone</keyword>
<keyword id="KW-0963">Cytoplasm</keyword>
<keyword id="KW-0342">GTP-binding</keyword>
<keyword id="KW-0996">Nickel insertion</keyword>
<keyword id="KW-0547">Nucleotide-binding</keyword>
<proteinExistence type="inferred from homology"/>